<evidence type="ECO:0000269" key="1">
    <source>
    </source>
</evidence>
<dbReference type="EMBL" id="X07234">
    <property type="protein sequence ID" value="CAA30215.1"/>
    <property type="molecule type" value="Genomic_DNA"/>
</dbReference>
<dbReference type="PIR" id="S03216">
    <property type="entry name" value="S03216"/>
</dbReference>
<dbReference type="RefSeq" id="NP_039782.1">
    <property type="nucleotide sequence ID" value="NC_001338.1"/>
</dbReference>
<dbReference type="SMR" id="P20216"/>
<dbReference type="KEGG" id="vg:2559637"/>
<dbReference type="Proteomes" id="UP000000854">
    <property type="component" value="Genome"/>
</dbReference>
<accession>P20216</accession>
<name>E178_SSV1</name>
<organism>
    <name type="scientific">Sulfolobus spindle-shape virus 1</name>
    <name type="common">SSV1</name>
    <dbReference type="NCBI Taxonomy" id="244589"/>
    <lineage>
        <taxon>Viruses</taxon>
        <taxon>Viruses incertae sedis</taxon>
        <taxon>Fuselloviridae</taxon>
        <taxon>Alphafusellovirus</taxon>
    </lineage>
</organism>
<keyword id="KW-1185">Reference proteome</keyword>
<proteinExistence type="predicted"/>
<gene>
    <name type="ORF">e178</name>
</gene>
<reference key="1">
    <citation type="journal article" date="1991" name="Virology">
        <title>Complete nucleotide sequence of the virus SSV1 of the archaebacterium Sulfolobus shibatae.</title>
        <authorList>
            <person name="Palm P."/>
            <person name="Schleper C."/>
            <person name="Grampp B."/>
            <person name="Yeats S."/>
            <person name="McWilliam P."/>
            <person name="Reiter W.-D."/>
            <person name="Zillig W."/>
        </authorList>
    </citation>
    <scope>NUCLEOTIDE SEQUENCE [GENOMIC DNA]</scope>
</reference>
<reference key="2">
    <citation type="journal article" date="1999" name="Genetics">
        <title>Genetic requirements for the function of the archaeal virus SSV1 in Sulfolobus solfataricus: construction and testing of viral shuttle vectors.</title>
        <authorList>
            <person name="Stedman K.M."/>
            <person name="Schleper C."/>
            <person name="Rumpf E."/>
            <person name="Zillig W."/>
        </authorList>
    </citation>
    <scope>FUNCTION</scope>
</reference>
<feature type="chain" id="PRO_0000223024" description="Uncharacterized protein E-178">
    <location>
        <begin position="1"/>
        <end position="178"/>
    </location>
</feature>
<comment type="function">
    <text evidence="1">This protein is non-essential for virus function.</text>
</comment>
<sequence length="178" mass="20397">MDQRRVEDIAQIGAYSLPYDIVNIVYGAIVIYRASQEGKDPLAYASNKQGFKEAVKKLIKLGVIEKTTPYSLKKEYEEQVEKFDEIINYEDYERARYELYKLSEKADNLFTSSLVLYASVFLSLSELKPEILKIINEYIDQQTKVDYGKWIVIGIATASVLFAIASVLIHILAHVSIW</sequence>
<protein>
    <recommendedName>
        <fullName>Uncharacterized protein E-178</fullName>
    </recommendedName>
</protein>
<organismHost>
    <name type="scientific">Saccharolobus solfataricus</name>
    <name type="common">Sulfolobus solfataricus</name>
    <dbReference type="NCBI Taxonomy" id="2287"/>
</organismHost>